<sequence>MAVTSTAQACDLVIFGAKGDLARRKLLPSLYQLEKAGHIHPETRIIGVGRAEWDRDAYIKVVREALETFLKEPLDPALWTTLSNRLDFCNLDVEDTEGFKRLGTMLDQQNRTTINYFAMPPSTFGAICRGLGQAGLNKEPARVVMEKPLGTNLASSRVINNQVAEFFNECQVYRIDHYLGKETVLNLLALRFANSLFANNWDNRTIDHVQITVAEEVGIEGRWGYFDQAGQMRDMIQNHLLQILTMIAMSPPADLSTDRIRDEKVKVLRSLRRIDRSNVHEVTVRGQYTSGFVQGKKVPGYLEEEGANKTSNTETFVAIRVDIDDWRWSGVPFYLRTGKRLPSKCSEVVVYFKNPALNLFHDSYQQLPQNKLIIRLQPDEGVEIQILNKIPGLDHKHRLQTTKLDLSFSETFNQQHLADAYERLLLETMRGIQALFVRRDEVEEAWKWVDSIMDAWAMDNDSPKPYQAGTWGPVASVAMITRDGRSWNEVE</sequence>
<gene>
    <name evidence="1" type="primary">zwf</name>
    <name type="ordered locus">Dda3937_03574</name>
</gene>
<accession>P37986</accession>
<accession>E0SB89</accession>
<evidence type="ECO:0000255" key="1">
    <source>
        <dbReference type="HAMAP-Rule" id="MF_00966"/>
    </source>
</evidence>
<comment type="function">
    <text evidence="1">Catalyzes the oxidation of glucose 6-phosphate to 6-phosphogluconolactone.</text>
</comment>
<comment type="catalytic activity">
    <reaction evidence="1">
        <text>D-glucose 6-phosphate + NADP(+) = 6-phospho-D-glucono-1,5-lactone + NADPH + H(+)</text>
        <dbReference type="Rhea" id="RHEA:15841"/>
        <dbReference type="ChEBI" id="CHEBI:15378"/>
        <dbReference type="ChEBI" id="CHEBI:57783"/>
        <dbReference type="ChEBI" id="CHEBI:57955"/>
        <dbReference type="ChEBI" id="CHEBI:58349"/>
        <dbReference type="ChEBI" id="CHEBI:61548"/>
        <dbReference type="EC" id="1.1.1.49"/>
    </reaction>
</comment>
<comment type="pathway">
    <text evidence="1">Carbohydrate degradation; pentose phosphate pathway; D-ribulose 5-phosphate from D-glucose 6-phosphate (oxidative stage): step 1/3.</text>
</comment>
<comment type="similarity">
    <text evidence="1">Belongs to the glucose-6-phosphate dehydrogenase family.</text>
</comment>
<organism>
    <name type="scientific">Dickeya dadantii (strain 3937)</name>
    <name type="common">Erwinia chrysanthemi (strain 3937)</name>
    <dbReference type="NCBI Taxonomy" id="198628"/>
    <lineage>
        <taxon>Bacteria</taxon>
        <taxon>Pseudomonadati</taxon>
        <taxon>Pseudomonadota</taxon>
        <taxon>Gammaproteobacteria</taxon>
        <taxon>Enterobacterales</taxon>
        <taxon>Pectobacteriaceae</taxon>
        <taxon>Dickeya</taxon>
    </lineage>
</organism>
<reference key="1">
    <citation type="journal article" date="1994" name="Mol. Microbiol.">
        <title>Molecular analysis of the Erwinia chrysanthemi region containing the kdgA and zwf genes.</title>
        <authorList>
            <person name="Hugouvieux-Cotte-Pattat N."/>
            <person name="Robert-Baudouy J."/>
        </authorList>
    </citation>
    <scope>NUCLEOTIDE SEQUENCE [GENOMIC DNA]</scope>
    <source>
        <strain>3937</strain>
    </source>
</reference>
<reference key="2">
    <citation type="journal article" date="2011" name="J. Bacteriol.">
        <title>Genome sequence of the plant-pathogenic bacterium Dickeya dadantii 3937.</title>
        <authorList>
            <person name="Glasner J.D."/>
            <person name="Yang C.H."/>
            <person name="Reverchon S."/>
            <person name="Hugouvieux-Cotte-Pattat N."/>
            <person name="Condemine G."/>
            <person name="Bohin J.P."/>
            <person name="Van Gijsegem F."/>
            <person name="Yang S."/>
            <person name="Franza T."/>
            <person name="Expert D."/>
            <person name="Plunkett G. III"/>
            <person name="San Francisco M.J."/>
            <person name="Charkowski A.O."/>
            <person name="Py B."/>
            <person name="Bell K."/>
            <person name="Rauscher L."/>
            <person name="Rodriguez-Palenzuela P."/>
            <person name="Toussaint A."/>
            <person name="Holeva M.C."/>
            <person name="He S.Y."/>
            <person name="Douet V."/>
            <person name="Boccara M."/>
            <person name="Blanco C."/>
            <person name="Toth I."/>
            <person name="Anderson B.D."/>
            <person name="Biehl B.S."/>
            <person name="Mau B."/>
            <person name="Flynn S.M."/>
            <person name="Barras F."/>
            <person name="Lindeberg M."/>
            <person name="Birch P.R."/>
            <person name="Tsuyumu S."/>
            <person name="Shi X."/>
            <person name="Hibbing M."/>
            <person name="Yap M.N."/>
            <person name="Carpentier M."/>
            <person name="Dassa E."/>
            <person name="Umehara M."/>
            <person name="Kim J.F."/>
            <person name="Rusch M."/>
            <person name="Soni P."/>
            <person name="Mayhew G.F."/>
            <person name="Fouts D.E."/>
            <person name="Gill S.R."/>
            <person name="Blattner F.R."/>
            <person name="Keen N.T."/>
            <person name="Perna N.T."/>
        </authorList>
    </citation>
    <scope>NUCLEOTIDE SEQUENCE [LARGE SCALE GENOMIC DNA]</scope>
    <source>
        <strain>3937</strain>
    </source>
</reference>
<feature type="chain" id="PRO_0000068121" description="Glucose-6-phosphate 1-dehydrogenase">
    <location>
        <begin position="1"/>
        <end position="491"/>
    </location>
</feature>
<feature type="active site" description="Proton acceptor" evidence="1">
    <location>
        <position position="239"/>
    </location>
</feature>
<feature type="binding site" evidence="1">
    <location>
        <position position="50"/>
    </location>
    <ligand>
        <name>NADP(+)</name>
        <dbReference type="ChEBI" id="CHEBI:58349"/>
    </ligand>
</feature>
<feature type="binding site" evidence="1">
    <location>
        <begin position="92"/>
        <end position="93"/>
    </location>
    <ligand>
        <name>NADP(+)</name>
        <dbReference type="ChEBI" id="CHEBI:58349"/>
    </ligand>
</feature>
<feature type="binding site" evidence="1">
    <location>
        <position position="147"/>
    </location>
    <ligand>
        <name>NADP(+)</name>
        <dbReference type="ChEBI" id="CHEBI:58349"/>
    </ligand>
</feature>
<feature type="binding site" evidence="1">
    <location>
        <position position="177"/>
    </location>
    <ligand>
        <name>substrate</name>
    </ligand>
</feature>
<feature type="binding site" evidence="1">
    <location>
        <position position="181"/>
    </location>
    <ligand>
        <name>substrate</name>
    </ligand>
</feature>
<feature type="binding site" evidence="1">
    <location>
        <position position="215"/>
    </location>
    <ligand>
        <name>substrate</name>
    </ligand>
</feature>
<feature type="binding site" evidence="1">
    <location>
        <position position="234"/>
    </location>
    <ligand>
        <name>substrate</name>
    </ligand>
</feature>
<feature type="binding site" evidence="1">
    <location>
        <position position="339"/>
    </location>
    <ligand>
        <name>substrate</name>
    </ligand>
</feature>
<feature type="binding site" evidence="1">
    <location>
        <position position="344"/>
    </location>
    <ligand>
        <name>substrate</name>
    </ligand>
</feature>
<keyword id="KW-0119">Carbohydrate metabolism</keyword>
<keyword id="KW-0313">Glucose metabolism</keyword>
<keyword id="KW-0521">NADP</keyword>
<keyword id="KW-0560">Oxidoreductase</keyword>
<keyword id="KW-1185">Reference proteome</keyword>
<name>G6PD_DICD3</name>
<proteinExistence type="inferred from homology"/>
<protein>
    <recommendedName>
        <fullName evidence="1">Glucose-6-phosphate 1-dehydrogenase</fullName>
        <shortName evidence="1">G6PD</shortName>
        <ecNumber evidence="1">1.1.1.49</ecNumber>
    </recommendedName>
</protein>
<dbReference type="EC" id="1.1.1.49" evidence="1"/>
<dbReference type="EMBL" id="X74866">
    <property type="protein sequence ID" value="CAA52858.1"/>
    <property type="molecule type" value="Genomic_DNA"/>
</dbReference>
<dbReference type="EMBL" id="CP002038">
    <property type="protein sequence ID" value="ADM98358.1"/>
    <property type="molecule type" value="Genomic_DNA"/>
</dbReference>
<dbReference type="PIR" id="S37053">
    <property type="entry name" value="S37053"/>
</dbReference>
<dbReference type="RefSeq" id="WP_013317812.1">
    <property type="nucleotide sequence ID" value="NC_014500.1"/>
</dbReference>
<dbReference type="SMR" id="P37986"/>
<dbReference type="STRING" id="198628.Dda3937_03574"/>
<dbReference type="GeneID" id="55488972"/>
<dbReference type="KEGG" id="ddd:Dda3937_03574"/>
<dbReference type="PATRIC" id="fig|198628.6.peg.2134"/>
<dbReference type="eggNOG" id="COG0364">
    <property type="taxonomic scope" value="Bacteria"/>
</dbReference>
<dbReference type="HOGENOM" id="CLU_013524_5_0_6"/>
<dbReference type="OrthoDB" id="9802739at2"/>
<dbReference type="UniPathway" id="UPA00115">
    <property type="reaction ID" value="UER00408"/>
</dbReference>
<dbReference type="Proteomes" id="UP000006859">
    <property type="component" value="Chromosome"/>
</dbReference>
<dbReference type="GO" id="GO:0005829">
    <property type="term" value="C:cytosol"/>
    <property type="evidence" value="ECO:0007669"/>
    <property type="project" value="TreeGrafter"/>
</dbReference>
<dbReference type="GO" id="GO:0004345">
    <property type="term" value="F:glucose-6-phosphate dehydrogenase activity"/>
    <property type="evidence" value="ECO:0007669"/>
    <property type="project" value="UniProtKB-UniRule"/>
</dbReference>
<dbReference type="GO" id="GO:0050661">
    <property type="term" value="F:NADP binding"/>
    <property type="evidence" value="ECO:0007669"/>
    <property type="project" value="UniProtKB-UniRule"/>
</dbReference>
<dbReference type="GO" id="GO:0006006">
    <property type="term" value="P:glucose metabolic process"/>
    <property type="evidence" value="ECO:0007669"/>
    <property type="project" value="UniProtKB-KW"/>
</dbReference>
<dbReference type="GO" id="GO:0009051">
    <property type="term" value="P:pentose-phosphate shunt, oxidative branch"/>
    <property type="evidence" value="ECO:0007669"/>
    <property type="project" value="TreeGrafter"/>
</dbReference>
<dbReference type="FunFam" id="3.30.360.10:FF:000011">
    <property type="entry name" value="Glucose-6-phosphate 1-dehydrogenase"/>
    <property type="match status" value="1"/>
</dbReference>
<dbReference type="FunFam" id="3.40.50.720:FF:000079">
    <property type="entry name" value="Glucose-6-phosphate 1-dehydrogenase"/>
    <property type="match status" value="1"/>
</dbReference>
<dbReference type="Gene3D" id="3.30.360.10">
    <property type="entry name" value="Dihydrodipicolinate Reductase, domain 2"/>
    <property type="match status" value="1"/>
</dbReference>
<dbReference type="Gene3D" id="3.40.50.720">
    <property type="entry name" value="NAD(P)-binding Rossmann-like Domain"/>
    <property type="match status" value="1"/>
</dbReference>
<dbReference type="HAMAP" id="MF_00966">
    <property type="entry name" value="G6PD"/>
    <property type="match status" value="1"/>
</dbReference>
<dbReference type="InterPro" id="IPR001282">
    <property type="entry name" value="G6P_DH"/>
</dbReference>
<dbReference type="InterPro" id="IPR019796">
    <property type="entry name" value="G6P_DH_AS"/>
</dbReference>
<dbReference type="InterPro" id="IPR022675">
    <property type="entry name" value="G6P_DH_C"/>
</dbReference>
<dbReference type="InterPro" id="IPR022674">
    <property type="entry name" value="G6P_DH_NAD-bd"/>
</dbReference>
<dbReference type="InterPro" id="IPR036291">
    <property type="entry name" value="NAD(P)-bd_dom_sf"/>
</dbReference>
<dbReference type="NCBIfam" id="NF009492">
    <property type="entry name" value="PRK12853.1-3"/>
    <property type="match status" value="1"/>
</dbReference>
<dbReference type="NCBIfam" id="TIGR00871">
    <property type="entry name" value="zwf"/>
    <property type="match status" value="1"/>
</dbReference>
<dbReference type="PANTHER" id="PTHR23429:SF0">
    <property type="entry name" value="GLUCOSE-6-PHOSPHATE 1-DEHYDROGENASE"/>
    <property type="match status" value="1"/>
</dbReference>
<dbReference type="PANTHER" id="PTHR23429">
    <property type="entry name" value="GLUCOSE-6-PHOSPHATE 1-DEHYDROGENASE G6PD"/>
    <property type="match status" value="1"/>
</dbReference>
<dbReference type="Pfam" id="PF02781">
    <property type="entry name" value="G6PD_C"/>
    <property type="match status" value="1"/>
</dbReference>
<dbReference type="Pfam" id="PF00479">
    <property type="entry name" value="G6PD_N"/>
    <property type="match status" value="1"/>
</dbReference>
<dbReference type="PIRSF" id="PIRSF000110">
    <property type="entry name" value="G6PD"/>
    <property type="match status" value="1"/>
</dbReference>
<dbReference type="PRINTS" id="PR00079">
    <property type="entry name" value="G6PDHDRGNASE"/>
</dbReference>
<dbReference type="SUPFAM" id="SSF55347">
    <property type="entry name" value="Glyceraldehyde-3-phosphate dehydrogenase-like, C-terminal domain"/>
    <property type="match status" value="1"/>
</dbReference>
<dbReference type="SUPFAM" id="SSF51735">
    <property type="entry name" value="NAD(P)-binding Rossmann-fold domains"/>
    <property type="match status" value="1"/>
</dbReference>
<dbReference type="PROSITE" id="PS00069">
    <property type="entry name" value="G6P_DEHYDROGENASE"/>
    <property type="match status" value="1"/>
</dbReference>